<feature type="chain" id="PRO_0000100803" description="Phosphoribosylaminoimidazole-succinocarboxamide synthase">
    <location>
        <begin position="1"/>
        <end position="250"/>
    </location>
</feature>
<gene>
    <name evidence="1" type="primary">purC</name>
    <name type="ordered locus">BL1107</name>
</gene>
<comment type="catalytic activity">
    <reaction evidence="1">
        <text>5-amino-1-(5-phospho-D-ribosyl)imidazole-4-carboxylate + L-aspartate + ATP = (2S)-2-[5-amino-1-(5-phospho-beta-D-ribosyl)imidazole-4-carboxamido]succinate + ADP + phosphate + 2 H(+)</text>
        <dbReference type="Rhea" id="RHEA:22628"/>
        <dbReference type="ChEBI" id="CHEBI:15378"/>
        <dbReference type="ChEBI" id="CHEBI:29991"/>
        <dbReference type="ChEBI" id="CHEBI:30616"/>
        <dbReference type="ChEBI" id="CHEBI:43474"/>
        <dbReference type="ChEBI" id="CHEBI:58443"/>
        <dbReference type="ChEBI" id="CHEBI:77657"/>
        <dbReference type="ChEBI" id="CHEBI:456216"/>
        <dbReference type="EC" id="6.3.2.6"/>
    </reaction>
</comment>
<comment type="pathway">
    <text evidence="1">Purine metabolism; IMP biosynthesis via de novo pathway; 5-amino-1-(5-phospho-D-ribosyl)imidazole-4-carboxamide from 5-amino-1-(5-phospho-D-ribosyl)imidazole-4-carboxylate: step 1/2.</text>
</comment>
<comment type="similarity">
    <text evidence="1">Belongs to the SAICAR synthetase family.</text>
</comment>
<protein>
    <recommendedName>
        <fullName evidence="1">Phosphoribosylaminoimidazole-succinocarboxamide synthase</fullName>
        <ecNumber evidence="1">6.3.2.6</ecNumber>
    </recommendedName>
    <alternativeName>
        <fullName evidence="1">SAICAR synthetase</fullName>
    </alternativeName>
</protein>
<evidence type="ECO:0000255" key="1">
    <source>
        <dbReference type="HAMAP-Rule" id="MF_00137"/>
    </source>
</evidence>
<name>PUR7_BIFLO</name>
<accession>Q8G5A9</accession>
<proteinExistence type="inferred from homology"/>
<reference key="1">
    <citation type="journal article" date="2002" name="Proc. Natl. Acad. Sci. U.S.A.">
        <title>The genome sequence of Bifidobacterium longum reflects its adaptation to the human gastrointestinal tract.</title>
        <authorList>
            <person name="Schell M.A."/>
            <person name="Karmirantzou M."/>
            <person name="Snel B."/>
            <person name="Vilanova D."/>
            <person name="Berger B."/>
            <person name="Pessi G."/>
            <person name="Zwahlen M.-C."/>
            <person name="Desiere F."/>
            <person name="Bork P."/>
            <person name="Delley M."/>
            <person name="Pridmore R.D."/>
            <person name="Arigoni F."/>
        </authorList>
    </citation>
    <scope>NUCLEOTIDE SEQUENCE [LARGE SCALE GENOMIC DNA]</scope>
    <source>
        <strain>NCC 2705</strain>
    </source>
</reference>
<sequence>MEKLEKLYEGKAKQLYATDDPEVLWVEYKNTATAGDGEKKEDFTGKGRLNNLITTIIFDLLKKRGIDSHLIKRVDDTGQLVRKVNMFPLEIVLRNVAAGHFCSRLGVEEGLPLKEPVLEYFLKNDDLHDPFVNDDDLVALGVCTREDLAEIAPLARKINEALIEIFAKIDVKLVDFKIEMGRATDGTLLLADEITPDSCRLWDQKDHSGKVEHLDKDLFRRGLGSIIPAYEEIEERLAELAKSEGIEVAE</sequence>
<dbReference type="EC" id="6.3.2.6" evidence="1"/>
<dbReference type="EMBL" id="AE014295">
    <property type="protein sequence ID" value="AAN24914.1"/>
    <property type="molecule type" value="Genomic_DNA"/>
</dbReference>
<dbReference type="RefSeq" id="NP_696278.1">
    <property type="nucleotide sequence ID" value="NC_004307.2"/>
</dbReference>
<dbReference type="RefSeq" id="WP_007051209.1">
    <property type="nucleotide sequence ID" value="NC_004307.2"/>
</dbReference>
<dbReference type="SMR" id="Q8G5A9"/>
<dbReference type="STRING" id="206672.BL1107"/>
<dbReference type="EnsemblBacteria" id="AAN24914">
    <property type="protein sequence ID" value="AAN24914"/>
    <property type="gene ID" value="BL1107"/>
</dbReference>
<dbReference type="GeneID" id="69577746"/>
<dbReference type="KEGG" id="blo:BL1107"/>
<dbReference type="PATRIC" id="fig|206672.9.peg.815"/>
<dbReference type="HOGENOM" id="CLU_061495_2_0_11"/>
<dbReference type="OrthoDB" id="9801549at2"/>
<dbReference type="PhylomeDB" id="Q8G5A9"/>
<dbReference type="UniPathway" id="UPA00074">
    <property type="reaction ID" value="UER00131"/>
</dbReference>
<dbReference type="Proteomes" id="UP000000439">
    <property type="component" value="Chromosome"/>
</dbReference>
<dbReference type="GO" id="GO:0005524">
    <property type="term" value="F:ATP binding"/>
    <property type="evidence" value="ECO:0007669"/>
    <property type="project" value="UniProtKB-KW"/>
</dbReference>
<dbReference type="GO" id="GO:0004639">
    <property type="term" value="F:phosphoribosylaminoimidazolesuccinocarboxamide synthase activity"/>
    <property type="evidence" value="ECO:0007669"/>
    <property type="project" value="UniProtKB-UniRule"/>
</dbReference>
<dbReference type="GO" id="GO:0006189">
    <property type="term" value="P:'de novo' IMP biosynthetic process"/>
    <property type="evidence" value="ECO:0007669"/>
    <property type="project" value="UniProtKB-UniRule"/>
</dbReference>
<dbReference type="GO" id="GO:0009236">
    <property type="term" value="P:cobalamin biosynthetic process"/>
    <property type="evidence" value="ECO:0007669"/>
    <property type="project" value="InterPro"/>
</dbReference>
<dbReference type="CDD" id="cd01415">
    <property type="entry name" value="SAICAR_synt_PurC"/>
    <property type="match status" value="1"/>
</dbReference>
<dbReference type="FunFam" id="3.30.470.20:FF:000006">
    <property type="entry name" value="Phosphoribosylaminoimidazole-succinocarboxamide synthase"/>
    <property type="match status" value="1"/>
</dbReference>
<dbReference type="Gene3D" id="3.30.470.20">
    <property type="entry name" value="ATP-grasp fold, B domain"/>
    <property type="match status" value="1"/>
</dbReference>
<dbReference type="Gene3D" id="3.30.200.20">
    <property type="entry name" value="Phosphorylase Kinase, domain 1"/>
    <property type="match status" value="1"/>
</dbReference>
<dbReference type="HAMAP" id="MF_00137">
    <property type="entry name" value="SAICAR_synth"/>
    <property type="match status" value="1"/>
</dbReference>
<dbReference type="InterPro" id="IPR028923">
    <property type="entry name" value="SAICAR_synt/ADE2_N"/>
</dbReference>
<dbReference type="InterPro" id="IPR033934">
    <property type="entry name" value="SAICAR_synt_PurC"/>
</dbReference>
<dbReference type="InterPro" id="IPR001636">
    <property type="entry name" value="SAICAR_synth"/>
</dbReference>
<dbReference type="InterPro" id="IPR050089">
    <property type="entry name" value="SAICAR_synthetase"/>
</dbReference>
<dbReference type="NCBIfam" id="TIGR00081">
    <property type="entry name" value="purC"/>
    <property type="match status" value="1"/>
</dbReference>
<dbReference type="PANTHER" id="PTHR43599">
    <property type="entry name" value="MULTIFUNCTIONAL PROTEIN ADE2"/>
    <property type="match status" value="1"/>
</dbReference>
<dbReference type="PANTHER" id="PTHR43599:SF3">
    <property type="entry name" value="SI:DKEY-6E2.2"/>
    <property type="match status" value="1"/>
</dbReference>
<dbReference type="Pfam" id="PF01259">
    <property type="entry name" value="SAICAR_synt"/>
    <property type="match status" value="1"/>
</dbReference>
<dbReference type="SUPFAM" id="SSF56104">
    <property type="entry name" value="SAICAR synthase-like"/>
    <property type="match status" value="1"/>
</dbReference>
<organism>
    <name type="scientific">Bifidobacterium longum (strain NCC 2705)</name>
    <dbReference type="NCBI Taxonomy" id="206672"/>
    <lineage>
        <taxon>Bacteria</taxon>
        <taxon>Bacillati</taxon>
        <taxon>Actinomycetota</taxon>
        <taxon>Actinomycetes</taxon>
        <taxon>Bifidobacteriales</taxon>
        <taxon>Bifidobacteriaceae</taxon>
        <taxon>Bifidobacterium</taxon>
    </lineage>
</organism>
<keyword id="KW-0067">ATP-binding</keyword>
<keyword id="KW-0436">Ligase</keyword>
<keyword id="KW-0547">Nucleotide-binding</keyword>
<keyword id="KW-0658">Purine biosynthesis</keyword>
<keyword id="KW-1185">Reference proteome</keyword>